<protein>
    <recommendedName>
        <fullName evidence="1">Glutamate/aspartate import permease protein GltK</fullName>
    </recommendedName>
</protein>
<name>GLTK_ECOL6</name>
<evidence type="ECO:0000250" key="1">
    <source>
        <dbReference type="UniProtKB" id="P0AER5"/>
    </source>
</evidence>
<evidence type="ECO:0000255" key="2"/>
<evidence type="ECO:0000255" key="3">
    <source>
        <dbReference type="PROSITE-ProRule" id="PRU00441"/>
    </source>
</evidence>
<evidence type="ECO:0000305" key="4"/>
<organism>
    <name type="scientific">Escherichia coli O6:H1 (strain CFT073 / ATCC 700928 / UPEC)</name>
    <dbReference type="NCBI Taxonomy" id="199310"/>
    <lineage>
        <taxon>Bacteria</taxon>
        <taxon>Pseudomonadati</taxon>
        <taxon>Pseudomonadota</taxon>
        <taxon>Gammaproteobacteria</taxon>
        <taxon>Enterobacterales</taxon>
        <taxon>Enterobacteriaceae</taxon>
        <taxon>Escherichia</taxon>
    </lineage>
</organism>
<comment type="function">
    <text evidence="1">Part of the ABC transporter complex GltIJKL involved in glutamate and aspartate uptake. Probably responsible for the translocation of the substrate across the membrane.</text>
</comment>
<comment type="subunit">
    <text evidence="1">The complex is composed of two ATP-binding proteins (GltL), two transmembrane proteins (GltJ and GltK) and a solute-binding protein (GltI).</text>
</comment>
<comment type="subcellular location">
    <subcellularLocation>
        <location evidence="1">Cell inner membrane</location>
        <topology evidence="2">Multi-pass membrane protein</topology>
    </subcellularLocation>
</comment>
<comment type="similarity">
    <text evidence="4">Belongs to the binding-protein-dependent transport system permease family. HisMQ subfamily.</text>
</comment>
<keyword id="KW-0029">Amino-acid transport</keyword>
<keyword id="KW-0997">Cell inner membrane</keyword>
<keyword id="KW-1003">Cell membrane</keyword>
<keyword id="KW-0472">Membrane</keyword>
<keyword id="KW-1185">Reference proteome</keyword>
<keyword id="KW-0812">Transmembrane</keyword>
<keyword id="KW-1133">Transmembrane helix</keyword>
<keyword id="KW-0813">Transport</keyword>
<gene>
    <name type="primary">gltK</name>
    <name type="ordered locus">c0737</name>
</gene>
<proteinExistence type="inferred from homology"/>
<accession>P0AER6</accession>
<accession>P41075</accession>
<reference key="1">
    <citation type="journal article" date="2002" name="Proc. Natl. Acad. Sci. U.S.A.">
        <title>Extensive mosaic structure revealed by the complete genome sequence of uropathogenic Escherichia coli.</title>
        <authorList>
            <person name="Welch R.A."/>
            <person name="Burland V."/>
            <person name="Plunkett G. III"/>
            <person name="Redford P."/>
            <person name="Roesch P."/>
            <person name="Rasko D."/>
            <person name="Buckles E.L."/>
            <person name="Liou S.-R."/>
            <person name="Boutin A."/>
            <person name="Hackett J."/>
            <person name="Stroud D."/>
            <person name="Mayhew G.F."/>
            <person name="Rose D.J."/>
            <person name="Zhou S."/>
            <person name="Schwartz D.C."/>
            <person name="Perna N.T."/>
            <person name="Mobley H.L.T."/>
            <person name="Donnenberg M.S."/>
            <person name="Blattner F.R."/>
        </authorList>
    </citation>
    <scope>NUCLEOTIDE SEQUENCE [LARGE SCALE GENOMIC DNA]</scope>
    <source>
        <strain>CFT073 / ATCC 700928 / UPEC</strain>
    </source>
</reference>
<feature type="chain" id="PRO_0000060039" description="Glutamate/aspartate import permease protein GltK">
    <location>
        <begin position="1"/>
        <end position="224"/>
    </location>
</feature>
<feature type="topological domain" description="Periplasmic" evidence="4">
    <location>
        <begin position="1"/>
        <end position="19"/>
    </location>
</feature>
<feature type="transmembrane region" description="Helical" evidence="2">
    <location>
        <begin position="20"/>
        <end position="40"/>
    </location>
</feature>
<feature type="topological domain" description="Cytoplasmic" evidence="4">
    <location>
        <begin position="41"/>
        <end position="67"/>
    </location>
</feature>
<feature type="transmembrane region" description="Helical" evidence="2">
    <location>
        <begin position="68"/>
        <end position="88"/>
    </location>
</feature>
<feature type="topological domain" description="Periplasmic" evidence="4">
    <location>
        <begin position="89"/>
        <end position="94"/>
    </location>
</feature>
<feature type="transmembrane region" description="Helical" evidence="2">
    <location>
        <begin position="95"/>
        <end position="112"/>
    </location>
</feature>
<feature type="topological domain" description="Cytoplasmic" evidence="4">
    <location>
        <begin position="113"/>
        <end position="154"/>
    </location>
</feature>
<feature type="transmembrane region" description="Helical" evidence="2">
    <location>
        <begin position="155"/>
        <end position="175"/>
    </location>
</feature>
<feature type="topological domain" description="Periplasmic" evidence="4">
    <location>
        <begin position="176"/>
        <end position="196"/>
    </location>
</feature>
<feature type="transmembrane region" description="Helical" evidence="2">
    <location>
        <begin position="197"/>
        <end position="217"/>
    </location>
</feature>
<feature type="topological domain" description="Cytoplasmic" evidence="1">
    <location>
        <begin position="218"/>
        <end position="224"/>
    </location>
</feature>
<feature type="domain" description="ABC transmembrane type-1" evidence="3">
    <location>
        <begin position="20"/>
        <end position="216"/>
    </location>
</feature>
<dbReference type="EMBL" id="AE014075">
    <property type="protein sequence ID" value="AAN79210.1"/>
    <property type="molecule type" value="Genomic_DNA"/>
</dbReference>
<dbReference type="RefSeq" id="WP_000272824.1">
    <property type="nucleotide sequence ID" value="NZ_CP051263.1"/>
</dbReference>
<dbReference type="SMR" id="P0AER6"/>
<dbReference type="STRING" id="199310.c0737"/>
<dbReference type="GeneID" id="93776829"/>
<dbReference type="KEGG" id="ecc:c0737"/>
<dbReference type="eggNOG" id="COG0765">
    <property type="taxonomic scope" value="Bacteria"/>
</dbReference>
<dbReference type="HOGENOM" id="CLU_019602_1_1_6"/>
<dbReference type="BioCyc" id="ECOL199310:C0737-MONOMER"/>
<dbReference type="Proteomes" id="UP000001410">
    <property type="component" value="Chromosome"/>
</dbReference>
<dbReference type="GO" id="GO:0043190">
    <property type="term" value="C:ATP-binding cassette (ABC) transporter complex"/>
    <property type="evidence" value="ECO:0007669"/>
    <property type="project" value="InterPro"/>
</dbReference>
<dbReference type="GO" id="GO:0022857">
    <property type="term" value="F:transmembrane transporter activity"/>
    <property type="evidence" value="ECO:0007669"/>
    <property type="project" value="InterPro"/>
</dbReference>
<dbReference type="GO" id="GO:0006865">
    <property type="term" value="P:amino acid transport"/>
    <property type="evidence" value="ECO:0007669"/>
    <property type="project" value="UniProtKB-KW"/>
</dbReference>
<dbReference type="CDD" id="cd06261">
    <property type="entry name" value="TM_PBP2"/>
    <property type="match status" value="1"/>
</dbReference>
<dbReference type="FunFam" id="1.10.3720.10:FF:000006">
    <property type="entry name" value="Glutamate/aspartate ABC transporter, permease protein GltK"/>
    <property type="match status" value="1"/>
</dbReference>
<dbReference type="Gene3D" id="1.10.3720.10">
    <property type="entry name" value="MetI-like"/>
    <property type="match status" value="1"/>
</dbReference>
<dbReference type="InterPro" id="IPR010065">
    <property type="entry name" value="AA_ABC_transptr_permease_3TM"/>
</dbReference>
<dbReference type="InterPro" id="IPR043429">
    <property type="entry name" value="ArtM/GltK/GlnP/TcyL/YhdX-like"/>
</dbReference>
<dbReference type="InterPro" id="IPR000515">
    <property type="entry name" value="MetI-like"/>
</dbReference>
<dbReference type="InterPro" id="IPR035906">
    <property type="entry name" value="MetI-like_sf"/>
</dbReference>
<dbReference type="NCBIfam" id="TIGR01726">
    <property type="entry name" value="HEQRo_perm_3TM"/>
    <property type="match status" value="1"/>
</dbReference>
<dbReference type="NCBIfam" id="NF011687">
    <property type="entry name" value="PRK15107.1"/>
    <property type="match status" value="1"/>
</dbReference>
<dbReference type="PANTHER" id="PTHR30614:SF1">
    <property type="entry name" value="GLUTAMATE_ASPARTATE IMPORT PERMEASE PROTEIN GLTK"/>
    <property type="match status" value="1"/>
</dbReference>
<dbReference type="PANTHER" id="PTHR30614">
    <property type="entry name" value="MEMBRANE COMPONENT OF AMINO ACID ABC TRANSPORTER"/>
    <property type="match status" value="1"/>
</dbReference>
<dbReference type="Pfam" id="PF00528">
    <property type="entry name" value="BPD_transp_1"/>
    <property type="match status" value="1"/>
</dbReference>
<dbReference type="SUPFAM" id="SSF161098">
    <property type="entry name" value="MetI-like"/>
    <property type="match status" value="1"/>
</dbReference>
<dbReference type="PROSITE" id="PS50928">
    <property type="entry name" value="ABC_TM1"/>
    <property type="match status" value="1"/>
</dbReference>
<sequence length="224" mass="24915">MYEFDWSSIVPSLPYLLDGLVITLKITVTAVVIGILWGTMLAVMRLSSFAPVAWFAKAYVNVFRSIPLVMVLLWFYLIVPGFLQNVLGLSPKNDIRLISAMVAFSMFEAAYYSEIIRAGIQSISRGQSSAALALGMTHWQSMKLIILPQAFRAMVPLLLTQGIVLFQDTSLVYVLSLADFFRTASTIGERDGTQVEMILFAGFVYFVISLSASLLVSYLKRRTA</sequence>